<comment type="function">
    <text evidence="1">RNA-binding protein required for the formation of nuclear paraspeckles. Binds to poly(A), poly(G) and poly(U) RNA homopolymers.</text>
</comment>
<comment type="subcellular location">
    <subcellularLocation>
        <location evidence="1">Nucleus speckle</location>
    </subcellularLocation>
    <text evidence="1">In punctate subnuclear structures often located adjacent to splicing speckles, called paraspeckles.</text>
</comment>
<comment type="similarity">
    <text evidence="5">Belongs to the PSPC family.</text>
</comment>
<reference key="1">
    <citation type="submission" date="2006-05" db="EMBL/GenBank/DDBJ databases">
        <authorList>
            <consortium name="NIH - Zebrafish Gene Collection (ZGC) project"/>
        </authorList>
    </citation>
    <scope>NUCLEOTIDE SEQUENCE [LARGE SCALE MRNA]</scope>
    <source>
        <tissue>Embryo</tissue>
    </source>
</reference>
<dbReference type="EMBL" id="BC116549">
    <property type="protein sequence ID" value="AAI16550.1"/>
    <property type="molecule type" value="mRNA"/>
</dbReference>
<dbReference type="RefSeq" id="NP_001038723.1">
    <property type="nucleotide sequence ID" value="NM_001045258.1"/>
</dbReference>
<dbReference type="SMR" id="Q1JPY8"/>
<dbReference type="FunCoup" id="Q1JPY8">
    <property type="interactions" value="1378"/>
</dbReference>
<dbReference type="STRING" id="7955.ENSDARP00000093111"/>
<dbReference type="PaxDb" id="7955-ENSDARP00000093111"/>
<dbReference type="Ensembl" id="ENSDART00000102335">
    <property type="protein sequence ID" value="ENSDARP00000093111"/>
    <property type="gene ID" value="ENSDARG00000006621"/>
</dbReference>
<dbReference type="GeneID" id="692285"/>
<dbReference type="KEGG" id="dre:692285"/>
<dbReference type="AGR" id="ZFIN:ZDB-GENE-030131-9530"/>
<dbReference type="CTD" id="55269"/>
<dbReference type="ZFIN" id="ZDB-GENE-030131-9530">
    <property type="gene designation" value="pspc1"/>
</dbReference>
<dbReference type="eggNOG" id="KOG0115">
    <property type="taxonomic scope" value="Eukaryota"/>
</dbReference>
<dbReference type="InParanoid" id="Q1JPY8"/>
<dbReference type="OMA" id="EQDMRMG"/>
<dbReference type="OrthoDB" id="10067824at2759"/>
<dbReference type="PhylomeDB" id="Q1JPY8"/>
<dbReference type="TreeFam" id="TF315795"/>
<dbReference type="PRO" id="PR:Q1JPY8"/>
<dbReference type="Proteomes" id="UP000000437">
    <property type="component" value="Chromosome 1"/>
</dbReference>
<dbReference type="Bgee" id="ENSDARG00000006621">
    <property type="expression patterns" value="Expressed in mature ovarian follicle and 26 other cell types or tissues"/>
</dbReference>
<dbReference type="ExpressionAtlas" id="Q1JPY8">
    <property type="expression patterns" value="baseline"/>
</dbReference>
<dbReference type="GO" id="GO:0016607">
    <property type="term" value="C:nuclear speck"/>
    <property type="evidence" value="ECO:0007669"/>
    <property type="project" value="UniProtKB-SubCell"/>
</dbReference>
<dbReference type="GO" id="GO:0005634">
    <property type="term" value="C:nucleus"/>
    <property type="evidence" value="ECO:0000318"/>
    <property type="project" value="GO_Central"/>
</dbReference>
<dbReference type="GO" id="GO:0003723">
    <property type="term" value="F:RNA binding"/>
    <property type="evidence" value="ECO:0000318"/>
    <property type="project" value="GO_Central"/>
</dbReference>
<dbReference type="GO" id="GO:0042752">
    <property type="term" value="P:regulation of circadian rhythm"/>
    <property type="evidence" value="ECO:0000250"/>
    <property type="project" value="UniProtKB"/>
</dbReference>
<dbReference type="GO" id="GO:0006355">
    <property type="term" value="P:regulation of DNA-templated transcription"/>
    <property type="evidence" value="ECO:0000318"/>
    <property type="project" value="GO_Central"/>
</dbReference>
<dbReference type="CDD" id="cd12949">
    <property type="entry name" value="NOPS_PSPC1"/>
    <property type="match status" value="1"/>
</dbReference>
<dbReference type="CDD" id="cd12586">
    <property type="entry name" value="RRM1_PSP1"/>
    <property type="match status" value="1"/>
</dbReference>
<dbReference type="CDD" id="cd12589">
    <property type="entry name" value="RRM2_PSP1"/>
    <property type="match status" value="1"/>
</dbReference>
<dbReference type="FunFam" id="3.30.70.330:FF:000043">
    <property type="entry name" value="paraspeckle component 1 isoform X1"/>
    <property type="match status" value="1"/>
</dbReference>
<dbReference type="FunFam" id="3.30.70.330:FF:000126">
    <property type="entry name" value="paraspeckle component 1 isoform X1"/>
    <property type="match status" value="1"/>
</dbReference>
<dbReference type="Gene3D" id="3.30.70.330">
    <property type="match status" value="2"/>
</dbReference>
<dbReference type="Gene3D" id="6.10.250.1170">
    <property type="match status" value="1"/>
</dbReference>
<dbReference type="InterPro" id="IPR012975">
    <property type="entry name" value="NOPS"/>
</dbReference>
<dbReference type="InterPro" id="IPR012677">
    <property type="entry name" value="Nucleotide-bd_a/b_plait_sf"/>
</dbReference>
<dbReference type="InterPro" id="IPR034522">
    <property type="entry name" value="PSP1_RRM1"/>
</dbReference>
<dbReference type="InterPro" id="IPR034523">
    <property type="entry name" value="PSP1_RRM2"/>
</dbReference>
<dbReference type="InterPro" id="IPR035979">
    <property type="entry name" value="RBD_domain_sf"/>
</dbReference>
<dbReference type="InterPro" id="IPR000504">
    <property type="entry name" value="RRM_dom"/>
</dbReference>
<dbReference type="PANTHER" id="PTHR23189">
    <property type="entry name" value="RNA RECOGNITION MOTIF-CONTAINING"/>
    <property type="match status" value="1"/>
</dbReference>
<dbReference type="Pfam" id="PF08075">
    <property type="entry name" value="NOPS"/>
    <property type="match status" value="1"/>
</dbReference>
<dbReference type="Pfam" id="PF00076">
    <property type="entry name" value="RRM_1"/>
    <property type="match status" value="2"/>
</dbReference>
<dbReference type="SMART" id="SM00360">
    <property type="entry name" value="RRM"/>
    <property type="match status" value="2"/>
</dbReference>
<dbReference type="SUPFAM" id="SSF54928">
    <property type="entry name" value="RNA-binding domain, RBD"/>
    <property type="match status" value="1"/>
</dbReference>
<dbReference type="PROSITE" id="PS50102">
    <property type="entry name" value="RRM"/>
    <property type="match status" value="2"/>
</dbReference>
<protein>
    <recommendedName>
        <fullName>Paraspeckle component 1</fullName>
    </recommendedName>
</protein>
<name>PSPC1_DANRE</name>
<gene>
    <name type="primary">pspc1</name>
    <name type="ORF">zgc:136470</name>
</gene>
<proteinExistence type="evidence at transcript level"/>
<feature type="chain" id="PRO_0000297544" description="Paraspeckle component 1">
    <location>
        <begin position="1"/>
        <end position="512"/>
    </location>
</feature>
<feature type="domain" description="RRM 1" evidence="3">
    <location>
        <begin position="76"/>
        <end position="148"/>
    </location>
</feature>
<feature type="domain" description="RRM 2" evidence="3">
    <location>
        <begin position="150"/>
        <end position="231"/>
    </location>
</feature>
<feature type="region of interest" description="Disordered" evidence="4">
    <location>
        <begin position="1"/>
        <end position="56"/>
    </location>
</feature>
<feature type="region of interest" description="Disordered" evidence="4">
    <location>
        <begin position="451"/>
        <end position="512"/>
    </location>
</feature>
<feature type="coiled-coil region" evidence="2">
    <location>
        <begin position="276"/>
        <end position="366"/>
    </location>
</feature>
<feature type="compositionally biased region" description="Polar residues" evidence="4">
    <location>
        <begin position="1"/>
        <end position="29"/>
    </location>
</feature>
<feature type="compositionally biased region" description="Polar residues" evidence="4">
    <location>
        <begin position="46"/>
        <end position="55"/>
    </location>
</feature>
<feature type="compositionally biased region" description="Polar residues" evidence="4">
    <location>
        <begin position="464"/>
        <end position="474"/>
    </location>
</feature>
<feature type="compositionally biased region" description="Gly residues" evidence="4">
    <location>
        <begin position="488"/>
        <end position="502"/>
    </location>
</feature>
<organism>
    <name type="scientific">Danio rerio</name>
    <name type="common">Zebrafish</name>
    <name type="synonym">Brachydanio rerio</name>
    <dbReference type="NCBI Taxonomy" id="7955"/>
    <lineage>
        <taxon>Eukaryota</taxon>
        <taxon>Metazoa</taxon>
        <taxon>Chordata</taxon>
        <taxon>Craniata</taxon>
        <taxon>Vertebrata</taxon>
        <taxon>Euteleostomi</taxon>
        <taxon>Actinopterygii</taxon>
        <taxon>Neopterygii</taxon>
        <taxon>Teleostei</taxon>
        <taxon>Ostariophysi</taxon>
        <taxon>Cypriniformes</taxon>
        <taxon>Danionidae</taxon>
        <taxon>Danioninae</taxon>
        <taxon>Danio</taxon>
    </lineage>
</organism>
<accession>Q1JPY8</accession>
<evidence type="ECO:0000250" key="1">
    <source>
        <dbReference type="UniProtKB" id="Q8WXF1"/>
    </source>
</evidence>
<evidence type="ECO:0000255" key="2"/>
<evidence type="ECO:0000255" key="3">
    <source>
        <dbReference type="PROSITE-ProRule" id="PRU00176"/>
    </source>
</evidence>
<evidence type="ECO:0000256" key="4">
    <source>
        <dbReference type="SAM" id="MobiDB-lite"/>
    </source>
</evidence>
<evidence type="ECO:0000305" key="5"/>
<keyword id="KW-0175">Coiled coil</keyword>
<keyword id="KW-0539">Nucleus</keyword>
<keyword id="KW-0597">Phosphoprotein</keyword>
<keyword id="KW-1185">Reference proteome</keyword>
<keyword id="KW-0677">Repeat</keyword>
<keyword id="KW-0694">RNA-binding</keyword>
<sequence>MANPNLKQVNIQNNATFPHQQNVTRSTESPGDPKETMEAVAPSPQDPSSANSEPQEMTVDIKNFRRPGEKTFTQRCRLFVGNLPSDMADEDFKKLFFKYGDAKEVFINRDRGFGFIRLETRTLAEIAKAELDGTVLGNRPIRIRFATHGAALTVRNLSPVVSNELLEQAFSQFGPVERAIVIVDDRGRPTGKGIVEFANKPAARKALDHCADGALLLTTSPRPVILEPTEQYDDEDGLPEKLLQKSAQYHKEREHKPHFAQPGTFEFEYSSRWKALDEMDKQQREQVERNIQEAKEKLETEMEAAKQEHQLMMMRQDLMRRQEELRRLEELRNQELQKRKQIELRHEEERRRREEDMIRHREQLDIRRQPDGFKSGFMESREQDMRMNEMGTRGAINIGDSFNPVTAISGNQGPTQMMGMGGRVGAMGPDGSSKMIPDNGVMPNERFSEGGPLQMGSPVGGQTGVDSPQPQQHSPMLVGAGSVPGVLGQSGFGRGSPVGGSFDGPNNKRRRY</sequence>